<dbReference type="EC" id="3.5.4.16" evidence="1"/>
<dbReference type="EMBL" id="CP000284">
    <property type="protein sequence ID" value="ABE50401.1"/>
    <property type="molecule type" value="Genomic_DNA"/>
</dbReference>
<dbReference type="RefSeq" id="WP_011480355.1">
    <property type="nucleotide sequence ID" value="NC_007947.1"/>
</dbReference>
<dbReference type="SMR" id="Q1GZD6"/>
<dbReference type="STRING" id="265072.Mfla_2134"/>
<dbReference type="KEGG" id="mfa:Mfla_2134"/>
<dbReference type="eggNOG" id="COG1469">
    <property type="taxonomic scope" value="Bacteria"/>
</dbReference>
<dbReference type="HOGENOM" id="CLU_062816_1_1_4"/>
<dbReference type="OrthoDB" id="9774824at2"/>
<dbReference type="UniPathway" id="UPA00848">
    <property type="reaction ID" value="UER00151"/>
</dbReference>
<dbReference type="Proteomes" id="UP000002440">
    <property type="component" value="Chromosome"/>
</dbReference>
<dbReference type="GO" id="GO:0003934">
    <property type="term" value="F:GTP cyclohydrolase I activity"/>
    <property type="evidence" value="ECO:0007669"/>
    <property type="project" value="UniProtKB-UniRule"/>
</dbReference>
<dbReference type="GO" id="GO:0046654">
    <property type="term" value="P:tetrahydrofolate biosynthetic process"/>
    <property type="evidence" value="ECO:0007669"/>
    <property type="project" value="UniProtKB-UniRule"/>
</dbReference>
<dbReference type="Gene3D" id="3.10.270.10">
    <property type="entry name" value="Urate Oxidase"/>
    <property type="match status" value="1"/>
</dbReference>
<dbReference type="HAMAP" id="MF_01527_B">
    <property type="entry name" value="GTP_cyclohydrol_B"/>
    <property type="match status" value="1"/>
</dbReference>
<dbReference type="InterPro" id="IPR022838">
    <property type="entry name" value="GTP_cyclohydrolase_FolE2"/>
</dbReference>
<dbReference type="InterPro" id="IPR003801">
    <property type="entry name" value="GTP_cyclohydrolase_FolE2/MptA"/>
</dbReference>
<dbReference type="NCBIfam" id="NF010200">
    <property type="entry name" value="PRK13674.1-1"/>
    <property type="match status" value="1"/>
</dbReference>
<dbReference type="PANTHER" id="PTHR36445">
    <property type="entry name" value="GTP CYCLOHYDROLASE MPTA"/>
    <property type="match status" value="1"/>
</dbReference>
<dbReference type="PANTHER" id="PTHR36445:SF1">
    <property type="entry name" value="GTP CYCLOHYDROLASE MPTA"/>
    <property type="match status" value="1"/>
</dbReference>
<dbReference type="Pfam" id="PF02649">
    <property type="entry name" value="GCHY-1"/>
    <property type="match status" value="1"/>
</dbReference>
<keyword id="KW-0378">Hydrolase</keyword>
<keyword id="KW-1185">Reference proteome</keyword>
<sequence length="266" mass="30297">MNQPSIPPIEDVQNTPDTRQLAIDKVGIKSIRHPVKVKDKTGGVQHTVATFNMYVYLPHNFKGTHMSRFVEILNNNEREISVESFESILRAMVERLDAESGHVEMTFPYFVNKTAPVSGVQSLSDYEVTFIGEINKGKYDITVKVVVPVTSLCPCSKKISDYGAHNQRSHVTVTALINDFIWVEDIIRMVEDQASCEVYGLLKRPDEKYVTERAYDNPKFVEDIVRDVAAQLNIETRIVSYTVESENFESIHNHSAYALIEKDKRK</sequence>
<protein>
    <recommendedName>
        <fullName evidence="1">GTP cyclohydrolase FolE2</fullName>
        <ecNumber evidence="1">3.5.4.16</ecNumber>
    </recommendedName>
</protein>
<gene>
    <name evidence="1" type="primary">folE2</name>
    <name type="ordered locus">Mfla_2134</name>
</gene>
<proteinExistence type="inferred from homology"/>
<feature type="chain" id="PRO_0000289498" description="GTP cyclohydrolase FolE2">
    <location>
        <begin position="1"/>
        <end position="266"/>
    </location>
</feature>
<feature type="site" description="May be catalytically important" evidence="1">
    <location>
        <position position="153"/>
    </location>
</feature>
<accession>Q1GZD6</accession>
<evidence type="ECO:0000255" key="1">
    <source>
        <dbReference type="HAMAP-Rule" id="MF_01527"/>
    </source>
</evidence>
<comment type="function">
    <text evidence="1">Converts GTP to 7,8-dihydroneopterin triphosphate.</text>
</comment>
<comment type="catalytic activity">
    <reaction evidence="1">
        <text>GTP + H2O = 7,8-dihydroneopterin 3'-triphosphate + formate + H(+)</text>
        <dbReference type="Rhea" id="RHEA:17473"/>
        <dbReference type="ChEBI" id="CHEBI:15377"/>
        <dbReference type="ChEBI" id="CHEBI:15378"/>
        <dbReference type="ChEBI" id="CHEBI:15740"/>
        <dbReference type="ChEBI" id="CHEBI:37565"/>
        <dbReference type="ChEBI" id="CHEBI:58462"/>
        <dbReference type="EC" id="3.5.4.16"/>
    </reaction>
</comment>
<comment type="pathway">
    <text evidence="1">Cofactor biosynthesis; 7,8-dihydroneopterin triphosphate biosynthesis; 7,8-dihydroneopterin triphosphate from GTP: step 1/1.</text>
</comment>
<comment type="similarity">
    <text evidence="1">Belongs to the GTP cyclohydrolase IV family.</text>
</comment>
<reference key="1">
    <citation type="submission" date="2006-03" db="EMBL/GenBank/DDBJ databases">
        <title>Complete sequence of Methylobacillus flagellatus KT.</title>
        <authorList>
            <consortium name="US DOE Joint Genome Institute"/>
            <person name="Copeland A."/>
            <person name="Lucas S."/>
            <person name="Lapidus A."/>
            <person name="Barry K."/>
            <person name="Detter J.C."/>
            <person name="Glavina del Rio T."/>
            <person name="Hammon N."/>
            <person name="Israni S."/>
            <person name="Dalin E."/>
            <person name="Tice H."/>
            <person name="Pitluck S."/>
            <person name="Brettin T."/>
            <person name="Bruce D."/>
            <person name="Han C."/>
            <person name="Tapia R."/>
            <person name="Saunders E."/>
            <person name="Gilna P."/>
            <person name="Schmutz J."/>
            <person name="Larimer F."/>
            <person name="Land M."/>
            <person name="Kyrpides N."/>
            <person name="Anderson I."/>
            <person name="Richardson P."/>
        </authorList>
    </citation>
    <scope>NUCLEOTIDE SEQUENCE [LARGE SCALE GENOMIC DNA]</scope>
    <source>
        <strain>ATCC 51484 / DSM 6875 / VKM B-1610 / KT</strain>
    </source>
</reference>
<name>GCH4_METFK</name>
<organism>
    <name type="scientific">Methylobacillus flagellatus (strain ATCC 51484 / DSM 6875 / VKM B-1610 / KT)</name>
    <dbReference type="NCBI Taxonomy" id="265072"/>
    <lineage>
        <taxon>Bacteria</taxon>
        <taxon>Pseudomonadati</taxon>
        <taxon>Pseudomonadota</taxon>
        <taxon>Betaproteobacteria</taxon>
        <taxon>Nitrosomonadales</taxon>
        <taxon>Methylophilaceae</taxon>
        <taxon>Methylobacillus</taxon>
    </lineage>
</organism>